<dbReference type="EC" id="2.3.1.191" evidence="1"/>
<dbReference type="EMBL" id="AJ749949">
    <property type="protein sequence ID" value="CAG44919.1"/>
    <property type="molecule type" value="Genomic_DNA"/>
</dbReference>
<dbReference type="RefSeq" id="WP_003021676.1">
    <property type="nucleotide sequence ID" value="NC_006570.2"/>
</dbReference>
<dbReference type="RefSeq" id="YP_169336.1">
    <property type="nucleotide sequence ID" value="NC_006570.2"/>
</dbReference>
<dbReference type="SMR" id="Q5NI06"/>
<dbReference type="STRING" id="177416.FTT_0286c"/>
<dbReference type="DNASU" id="3190871"/>
<dbReference type="EnsemblBacteria" id="CAG44919">
    <property type="protein sequence ID" value="CAG44919"/>
    <property type="gene ID" value="FTT_0286c"/>
</dbReference>
<dbReference type="KEGG" id="ftu:FTT_0286c"/>
<dbReference type="eggNOG" id="COG1044">
    <property type="taxonomic scope" value="Bacteria"/>
</dbReference>
<dbReference type="OrthoDB" id="9784739at2"/>
<dbReference type="UniPathway" id="UPA00973"/>
<dbReference type="Proteomes" id="UP000001174">
    <property type="component" value="Chromosome"/>
</dbReference>
<dbReference type="GO" id="GO:0016020">
    <property type="term" value="C:membrane"/>
    <property type="evidence" value="ECO:0007669"/>
    <property type="project" value="GOC"/>
</dbReference>
<dbReference type="GO" id="GO:0016410">
    <property type="term" value="F:N-acyltransferase activity"/>
    <property type="evidence" value="ECO:0007669"/>
    <property type="project" value="InterPro"/>
</dbReference>
<dbReference type="GO" id="GO:0009245">
    <property type="term" value="P:lipid A biosynthetic process"/>
    <property type="evidence" value="ECO:0007669"/>
    <property type="project" value="UniProtKB-UniRule"/>
</dbReference>
<dbReference type="CDD" id="cd03352">
    <property type="entry name" value="LbH_LpxD"/>
    <property type="match status" value="1"/>
</dbReference>
<dbReference type="Gene3D" id="2.160.10.10">
    <property type="entry name" value="Hexapeptide repeat proteins"/>
    <property type="match status" value="1"/>
</dbReference>
<dbReference type="Gene3D" id="3.40.1390.10">
    <property type="entry name" value="MurE/MurF, N-terminal domain"/>
    <property type="match status" value="1"/>
</dbReference>
<dbReference type="HAMAP" id="MF_00523">
    <property type="entry name" value="LpxD"/>
    <property type="match status" value="1"/>
</dbReference>
<dbReference type="InterPro" id="IPR001451">
    <property type="entry name" value="Hexapep"/>
</dbReference>
<dbReference type="InterPro" id="IPR018357">
    <property type="entry name" value="Hexapep_transf_CS"/>
</dbReference>
<dbReference type="InterPro" id="IPR007691">
    <property type="entry name" value="LpxD"/>
</dbReference>
<dbReference type="InterPro" id="IPR011004">
    <property type="entry name" value="Trimer_LpxA-like_sf"/>
</dbReference>
<dbReference type="InterPro" id="IPR020573">
    <property type="entry name" value="UDP_GlcNAc_AcTrfase_non-rep"/>
</dbReference>
<dbReference type="NCBIfam" id="TIGR01853">
    <property type="entry name" value="lipid_A_lpxD"/>
    <property type="match status" value="1"/>
</dbReference>
<dbReference type="NCBIfam" id="NF002060">
    <property type="entry name" value="PRK00892.1"/>
    <property type="match status" value="1"/>
</dbReference>
<dbReference type="PANTHER" id="PTHR43378">
    <property type="entry name" value="UDP-3-O-ACYLGLUCOSAMINE N-ACYLTRANSFERASE"/>
    <property type="match status" value="1"/>
</dbReference>
<dbReference type="PANTHER" id="PTHR43378:SF2">
    <property type="entry name" value="UDP-3-O-ACYLGLUCOSAMINE N-ACYLTRANSFERASE 1, MITOCHONDRIAL-RELATED"/>
    <property type="match status" value="1"/>
</dbReference>
<dbReference type="Pfam" id="PF00132">
    <property type="entry name" value="Hexapep"/>
    <property type="match status" value="2"/>
</dbReference>
<dbReference type="Pfam" id="PF04613">
    <property type="entry name" value="LpxD"/>
    <property type="match status" value="1"/>
</dbReference>
<dbReference type="SUPFAM" id="SSF51161">
    <property type="entry name" value="Trimeric LpxA-like enzymes"/>
    <property type="match status" value="1"/>
</dbReference>
<dbReference type="PROSITE" id="PS00101">
    <property type="entry name" value="HEXAPEP_TRANSFERASES"/>
    <property type="match status" value="1"/>
</dbReference>
<proteinExistence type="inferred from homology"/>
<feature type="chain" id="PRO_0000264372" description="UDP-3-O-acylglucosamine N-acyltransferase 1">
    <location>
        <begin position="1"/>
        <end position="347"/>
    </location>
</feature>
<feature type="active site" description="Proton acceptor" evidence="1">
    <location>
        <position position="246"/>
    </location>
</feature>
<evidence type="ECO:0000255" key="1">
    <source>
        <dbReference type="HAMAP-Rule" id="MF_00523"/>
    </source>
</evidence>
<reference key="1">
    <citation type="journal article" date="2005" name="Nat. Genet.">
        <title>The complete genome sequence of Francisella tularensis, the causative agent of tularemia.</title>
        <authorList>
            <person name="Larsson P."/>
            <person name="Oyston P.C.F."/>
            <person name="Chain P."/>
            <person name="Chu M.C."/>
            <person name="Duffield M."/>
            <person name="Fuxelius H.-H."/>
            <person name="Garcia E."/>
            <person name="Haelltorp G."/>
            <person name="Johansson D."/>
            <person name="Isherwood K.E."/>
            <person name="Karp P.D."/>
            <person name="Larsson E."/>
            <person name="Liu Y."/>
            <person name="Michell S."/>
            <person name="Prior J."/>
            <person name="Prior R."/>
            <person name="Malfatti S."/>
            <person name="Sjoestedt A."/>
            <person name="Svensson K."/>
            <person name="Thompson N."/>
            <person name="Vergez L."/>
            <person name="Wagg J.K."/>
            <person name="Wren B.W."/>
            <person name="Lindler L.E."/>
            <person name="Andersson S.G.E."/>
            <person name="Forsman M."/>
            <person name="Titball R.W."/>
        </authorList>
    </citation>
    <scope>NUCLEOTIDE SEQUENCE [LARGE SCALE GENOMIC DNA]</scope>
    <source>
        <strain>SCHU S4 / Schu 4</strain>
    </source>
</reference>
<protein>
    <recommendedName>
        <fullName evidence="1">UDP-3-O-acylglucosamine N-acyltransferase 1</fullName>
        <ecNumber evidence="1">2.3.1.191</ecNumber>
    </recommendedName>
</protein>
<sequence length="347" mass="37384">MQYTLKQISEHLNAKVINEPSGEVIITGLTYAEQAKENDLTLIDKQEHIKLWQNSKATAAIVSKKISKELAQVNDKPLIVVNNADLAMAKILELFSVPYPEQNGIHEKAIIDPTAKIGKNVSIGPSAYIGKNVEIGDNTIIYANVCIYNDAKVGTNCIIWPSVIIRDRTIIGHFCRLCSNCSIGSDGFGYRPSEDGRTIVRIPHIGNVVIGSFVDIGSNTCINNAKYGSTIIGDYTKIDNLVQIGHNVIIGKGCMICGQAGISGSVTIGDGVIIAGNAGIKDHTNIGSDARIGGKAGVMWDVPAGESHMGYPAYKDSELAKQWIAIRKLPETMKKLKAIAKSLNIDL</sequence>
<gene>
    <name evidence="1" type="primary">lpxD1</name>
    <name type="synonym">lpxD2</name>
    <name type="ordered locus">FTT_0286c</name>
</gene>
<comment type="function">
    <text evidence="1">Catalyzes the N-acylation of UDP-3-O-acylglucosamine using 3-hydroxyacyl-ACP as the acyl donor. Is involved in the biosynthesis of lipid A, a phosphorylated glycolipid that anchors the lipopolysaccharide to the outer membrane of the cell.</text>
</comment>
<comment type="catalytic activity">
    <reaction evidence="1">
        <text>a UDP-3-O-[(3R)-3-hydroxyacyl]-alpha-D-glucosamine + a (3R)-hydroxyacyl-[ACP] = a UDP-2-N,3-O-bis[(3R)-3-hydroxyacyl]-alpha-D-glucosamine + holo-[ACP] + H(+)</text>
        <dbReference type="Rhea" id="RHEA:53836"/>
        <dbReference type="Rhea" id="RHEA-COMP:9685"/>
        <dbReference type="Rhea" id="RHEA-COMP:9945"/>
        <dbReference type="ChEBI" id="CHEBI:15378"/>
        <dbReference type="ChEBI" id="CHEBI:64479"/>
        <dbReference type="ChEBI" id="CHEBI:78827"/>
        <dbReference type="ChEBI" id="CHEBI:137740"/>
        <dbReference type="ChEBI" id="CHEBI:137748"/>
        <dbReference type="EC" id="2.3.1.191"/>
    </reaction>
</comment>
<comment type="pathway">
    <text evidence="1">Bacterial outer membrane biogenesis; LPS lipid A biosynthesis.</text>
</comment>
<comment type="subunit">
    <text evidence="1">Homotrimer.</text>
</comment>
<comment type="similarity">
    <text evidence="1">Belongs to the transferase hexapeptide repeat family. LpxD subfamily.</text>
</comment>
<organism>
    <name type="scientific">Francisella tularensis subsp. tularensis (strain SCHU S4 / Schu 4)</name>
    <dbReference type="NCBI Taxonomy" id="177416"/>
    <lineage>
        <taxon>Bacteria</taxon>
        <taxon>Pseudomonadati</taxon>
        <taxon>Pseudomonadota</taxon>
        <taxon>Gammaproteobacteria</taxon>
        <taxon>Thiotrichales</taxon>
        <taxon>Francisellaceae</taxon>
        <taxon>Francisella</taxon>
    </lineage>
</organism>
<accession>Q5NI06</accession>
<name>LPXD1_FRATT</name>
<keyword id="KW-0012">Acyltransferase</keyword>
<keyword id="KW-0441">Lipid A biosynthesis</keyword>
<keyword id="KW-0444">Lipid biosynthesis</keyword>
<keyword id="KW-0443">Lipid metabolism</keyword>
<keyword id="KW-1185">Reference proteome</keyword>
<keyword id="KW-0677">Repeat</keyword>
<keyword id="KW-0808">Transferase</keyword>